<proteinExistence type="evidence at protein level"/>
<comment type="function">
    <text evidence="1 2">Catalyzes the 3-hydroxylation of L-asparagine to (2S,3S)-3-hydroxyasparagine. The 3-hydroxylated asparagine produced is incorporated at position 9 during the biosynthesis of the non-ribosomally synthesized calcium-dependent antibiotic (CDA), a 11-residue acidic lipopeptide lactone. Is able to hydroxylate only free L-asparagine, since it hydroxylates neither a CDA analog with unmodified Asn at position 9 nor a peptidyl-carrier-protein (PCP)-bound asparagine. Is not active toward D-asparagine.</text>
</comment>
<comment type="catalytic activity">
    <reaction evidence="2">
        <text>L-asparagine + 2-oxoglutarate + O2 = (2S,3S)-3-hydroxyasparagine + succinate + CO2</text>
        <dbReference type="Rhea" id="RHEA:25772"/>
        <dbReference type="ChEBI" id="CHEBI:15379"/>
        <dbReference type="ChEBI" id="CHEBI:16526"/>
        <dbReference type="ChEBI" id="CHEBI:16810"/>
        <dbReference type="ChEBI" id="CHEBI:30031"/>
        <dbReference type="ChEBI" id="CHEBI:58048"/>
        <dbReference type="ChEBI" id="CHEBI:58850"/>
        <dbReference type="EC" id="1.14.11.39"/>
    </reaction>
</comment>
<comment type="cofactor">
    <cofactor evidence="2">
        <name>Fe(2+)</name>
        <dbReference type="ChEBI" id="CHEBI:29033"/>
    </cofactor>
    <text evidence="2">Binds 1 Fe(2+) ion per subunit.</text>
</comment>
<comment type="biophysicochemical properties">
    <kinetics>
        <KM evidence="2">479 uM for L-asparagine</KM>
    </kinetics>
</comment>
<comment type="pathway">
    <text>Antibiotic biosynthesis; calcium-dependent antibiotic biosynthesis.</text>
</comment>
<comment type="disruption phenotype">
    <text evidence="1">S.coelicolor strain A3(2) / MT1110 and A3(2) / 2377 lacking asnO produce non-hydroxylated asparagine-containing CDA variants, which are not synthesized by the wild-types but retain calcium-dependent antimicrobial activity.</text>
</comment>
<comment type="similarity">
    <text evidence="3">Belongs to the clavaminate synthase family.</text>
</comment>
<sequence length="333" mass="35982">MAANAAGPASRYDVTLDQSDAELVEEIAWKLATQATGRPDDAEWVEAARNAWHAWPATLRRDLAGFRRDSGPDGAIVLRGLPVDSMGLPPTPRVNGSVQREASLGAAVLLMTACGLGDPGAFLPEKNGALVQDVVPVPGMEEFQGNAGSTLLTFHNENAFHEHRPDFVMLLCLRADPTGRAGLRTACVRRVLPLLSDSTVDALWAPEFRTAPPPSFQLSGPEEAPAPVLLGDRSDPDLRVDLAATEPVTERAAEALRELQAHFDATAVTHRLLPGELAIVDNRVTVHGRTEFTPRYDGTDRWLQRTFVLTDLRRSRAMRPADGYVLGAAPQPA</sequence>
<reference key="1">
    <citation type="journal article" date="2002" name="Nature">
        <title>Complete genome sequence of the model actinomycete Streptomyces coelicolor A3(2).</title>
        <authorList>
            <person name="Bentley S.D."/>
            <person name="Chater K.F."/>
            <person name="Cerdeno-Tarraga A.-M."/>
            <person name="Challis G.L."/>
            <person name="Thomson N.R."/>
            <person name="James K.D."/>
            <person name="Harris D.E."/>
            <person name="Quail M.A."/>
            <person name="Kieser H."/>
            <person name="Harper D."/>
            <person name="Bateman A."/>
            <person name="Brown S."/>
            <person name="Chandra G."/>
            <person name="Chen C.W."/>
            <person name="Collins M."/>
            <person name="Cronin A."/>
            <person name="Fraser A."/>
            <person name="Goble A."/>
            <person name="Hidalgo J."/>
            <person name="Hornsby T."/>
            <person name="Howarth S."/>
            <person name="Huang C.-H."/>
            <person name="Kieser T."/>
            <person name="Larke L."/>
            <person name="Murphy L.D."/>
            <person name="Oliver K."/>
            <person name="O'Neil S."/>
            <person name="Rabbinowitsch E."/>
            <person name="Rajandream M.A."/>
            <person name="Rutherford K.M."/>
            <person name="Rutter S."/>
            <person name="Seeger K."/>
            <person name="Saunders D."/>
            <person name="Sharp S."/>
            <person name="Squares R."/>
            <person name="Squares S."/>
            <person name="Taylor K."/>
            <person name="Warren T."/>
            <person name="Wietzorrek A."/>
            <person name="Woodward J.R."/>
            <person name="Barrell B.G."/>
            <person name="Parkhill J."/>
            <person name="Hopwood D.A."/>
        </authorList>
    </citation>
    <scope>NUCLEOTIDE SEQUENCE [LARGE SCALE GENOMIC DNA]</scope>
    <source>
        <strain>ATCC BAA-471 / A3(2) / M145</strain>
    </source>
</reference>
<reference key="2">
    <citation type="journal article" date="2007" name="Microbiology">
        <title>An asparagine oxygenase (AsnO) and a 3-hydroxyasparaginyl phosphotransferase (HasP) are involved in the biosynthesis of calcium-dependent lipopeptide antibiotics.</title>
        <authorList>
            <person name="Neary J.M."/>
            <person name="Powell A."/>
            <person name="Gordon L."/>
            <person name="Milne C."/>
            <person name="Flett F."/>
            <person name="Wilkinson B."/>
            <person name="Smith C.P."/>
            <person name="Micklefield J."/>
        </authorList>
    </citation>
    <scope>ROLE IN CDA BIOSYNTHESIS</scope>
    <scope>DISRUPTION PHENOTYPE</scope>
    <source>
        <strain>A3(2) / 2377</strain>
        <strain>A3(2) / MT1110</strain>
    </source>
</reference>
<reference key="3">
    <citation type="journal article" date="2007" name="ACS Chem. Biol.">
        <title>Mechanistic and structural basis of stereospecific Cbeta-hydroxylation in calcium-dependent antibiotic, a daptomycin-type lipopeptide.</title>
        <authorList>
            <person name="Strieker M."/>
            <person name="Kopp F."/>
            <person name="Mahlert C."/>
            <person name="Essen L.-O."/>
            <person name="Marahiel M.A."/>
        </authorList>
    </citation>
    <scope>X-RAY CRYSTALLOGRAPHY (1.45 ANGSTROMS) OF APOENZYME AND IN COMPLEXES WITH IRON AND PRODUCTS</scope>
    <scope>FUNCTION</scope>
    <scope>CATALYTIC ACTIVITY</scope>
    <scope>SUBSTRATE SPECIFICITY</scope>
    <scope>COFACTOR</scope>
    <scope>KINETIC PARAMETERS</scope>
    <scope>STEREOSELECTIVITY</scope>
    <scope>REACTION MECHANISM</scope>
    <source>
        <strain>A3(2) / DSM 40783 / JCM 4979 / NBRC 15732</strain>
    </source>
</reference>
<organism>
    <name type="scientific">Streptomyces coelicolor (strain ATCC BAA-471 / A3(2) / M145)</name>
    <dbReference type="NCBI Taxonomy" id="100226"/>
    <lineage>
        <taxon>Bacteria</taxon>
        <taxon>Bacillati</taxon>
        <taxon>Actinomycetota</taxon>
        <taxon>Actinomycetes</taxon>
        <taxon>Kitasatosporales</taxon>
        <taxon>Streptomycetaceae</taxon>
        <taxon>Streptomyces</taxon>
        <taxon>Streptomyces albidoflavus group</taxon>
    </lineage>
</organism>
<dbReference type="EC" id="1.14.11.39"/>
<dbReference type="EMBL" id="AL939115">
    <property type="protein sequence ID" value="CAB38880.1"/>
    <property type="molecule type" value="Genomic_DNA"/>
</dbReference>
<dbReference type="PIR" id="T36184">
    <property type="entry name" value="T36184"/>
</dbReference>
<dbReference type="RefSeq" id="NP_627448.1">
    <property type="nucleotide sequence ID" value="NC_003888.3"/>
</dbReference>
<dbReference type="RefSeq" id="WP_003975576.1">
    <property type="nucleotide sequence ID" value="NZ_VNID01000025.1"/>
</dbReference>
<dbReference type="PDB" id="2OG5">
    <property type="method" value="X-ray"/>
    <property type="resolution" value="1.45 A"/>
    <property type="chains" value="A=2-333"/>
</dbReference>
<dbReference type="PDB" id="2OG6">
    <property type="method" value="X-ray"/>
    <property type="resolution" value="1.92 A"/>
    <property type="chains" value="A=2-333"/>
</dbReference>
<dbReference type="PDB" id="2OG7">
    <property type="method" value="X-ray"/>
    <property type="resolution" value="1.66 A"/>
    <property type="chains" value="A=2-333"/>
</dbReference>
<dbReference type="PDBsum" id="2OG5"/>
<dbReference type="PDBsum" id="2OG6"/>
<dbReference type="PDBsum" id="2OG7"/>
<dbReference type="SMR" id="Q9Z4Z5"/>
<dbReference type="STRING" id="100226.gene:17760854"/>
<dbReference type="PaxDb" id="100226-SCO3236"/>
<dbReference type="GeneID" id="91385741"/>
<dbReference type="KEGG" id="sco:SCO3236"/>
<dbReference type="PATRIC" id="fig|100226.15.peg.3300"/>
<dbReference type="eggNOG" id="COG2175">
    <property type="taxonomic scope" value="Bacteria"/>
</dbReference>
<dbReference type="HOGENOM" id="CLU_044078_0_0_11"/>
<dbReference type="InParanoid" id="Q9Z4Z5"/>
<dbReference type="OrthoDB" id="3872700at2"/>
<dbReference type="PhylomeDB" id="Q9Z4Z5"/>
<dbReference type="BRENDA" id="1.14.11.39">
    <property type="organism ID" value="5998"/>
</dbReference>
<dbReference type="SABIO-RK" id="Q9Z4Z5"/>
<dbReference type="UniPathway" id="UPA00979"/>
<dbReference type="EvolutionaryTrace" id="Q9Z4Z5"/>
<dbReference type="Proteomes" id="UP000001973">
    <property type="component" value="Chromosome"/>
</dbReference>
<dbReference type="GO" id="GO:0005506">
    <property type="term" value="F:iron ion binding"/>
    <property type="evidence" value="ECO:0007669"/>
    <property type="project" value="InterPro"/>
</dbReference>
<dbReference type="GO" id="GO:0016491">
    <property type="term" value="F:oxidoreductase activity"/>
    <property type="evidence" value="ECO:0007669"/>
    <property type="project" value="UniProtKB-KW"/>
</dbReference>
<dbReference type="GO" id="GO:0017000">
    <property type="term" value="P:antibiotic biosynthetic process"/>
    <property type="evidence" value="ECO:0007669"/>
    <property type="project" value="UniProtKB-KW"/>
</dbReference>
<dbReference type="CDD" id="cd00250">
    <property type="entry name" value="CAS_like"/>
    <property type="match status" value="1"/>
</dbReference>
<dbReference type="FunFam" id="3.60.130.10:FF:000013">
    <property type="entry name" value="Alpha-ketoglutarate-dependent L-arginine hydroxylase"/>
    <property type="match status" value="1"/>
</dbReference>
<dbReference type="Gene3D" id="3.60.130.10">
    <property type="entry name" value="Clavaminate synthase-like"/>
    <property type="match status" value="1"/>
</dbReference>
<dbReference type="InterPro" id="IPR050411">
    <property type="entry name" value="AlphaKG_dependent_hydroxylases"/>
</dbReference>
<dbReference type="InterPro" id="IPR014503">
    <property type="entry name" value="Clavaminate_syn-like"/>
</dbReference>
<dbReference type="InterPro" id="IPR042098">
    <property type="entry name" value="TauD-like_sf"/>
</dbReference>
<dbReference type="InterPro" id="IPR003819">
    <property type="entry name" value="TauD/TfdA-like"/>
</dbReference>
<dbReference type="PANTHER" id="PTHR10696">
    <property type="entry name" value="GAMMA-BUTYROBETAINE HYDROXYLASE-RELATED"/>
    <property type="match status" value="1"/>
</dbReference>
<dbReference type="PANTHER" id="PTHR10696:SF56">
    <property type="entry name" value="TAUD_TFDA-LIKE DOMAIN-CONTAINING PROTEIN"/>
    <property type="match status" value="1"/>
</dbReference>
<dbReference type="Pfam" id="PF02668">
    <property type="entry name" value="TauD"/>
    <property type="match status" value="1"/>
</dbReference>
<dbReference type="PIRSF" id="PIRSF019543">
    <property type="entry name" value="Clavaminate_syn"/>
    <property type="match status" value="1"/>
</dbReference>
<dbReference type="SUPFAM" id="SSF51197">
    <property type="entry name" value="Clavaminate synthase-like"/>
    <property type="match status" value="1"/>
</dbReference>
<name>ASNO_STRCO</name>
<gene>
    <name type="primary">asnO</name>
    <name type="ordered locus">SCO3236</name>
    <name type="ORF">SCE29.05c</name>
</gene>
<evidence type="ECO:0000269" key="1">
    <source>
    </source>
</evidence>
<evidence type="ECO:0000269" key="2">
    <source>
    </source>
</evidence>
<evidence type="ECO:0000305" key="3"/>
<evidence type="ECO:0007829" key="4">
    <source>
        <dbReference type="PDB" id="2OG5"/>
    </source>
</evidence>
<evidence type="ECO:0007829" key="5">
    <source>
        <dbReference type="PDB" id="2OG7"/>
    </source>
</evidence>
<protein>
    <recommendedName>
        <fullName>L-asparagine oxygenase</fullName>
        <ecNumber>1.14.11.39</ecNumber>
    </recommendedName>
    <alternativeName>
        <fullName>L-asparagine 3-hydroxylase</fullName>
    </alternativeName>
</protein>
<accession>Q9Z4Z5</accession>
<keyword id="KW-0002">3D-structure</keyword>
<keyword id="KW-0045">Antibiotic biosynthesis</keyword>
<keyword id="KW-0408">Iron</keyword>
<keyword id="KW-0479">Metal-binding</keyword>
<keyword id="KW-0560">Oxidoreductase</keyword>
<keyword id="KW-1185">Reference proteome</keyword>
<feature type="chain" id="PRO_0000350724" description="L-asparagine oxygenase">
    <location>
        <begin position="1"/>
        <end position="333"/>
    </location>
</feature>
<feature type="binding site" evidence="2">
    <location>
        <position position="125"/>
    </location>
    <ligand>
        <name>L-asparagine</name>
        <dbReference type="ChEBI" id="CHEBI:58048"/>
    </ligand>
</feature>
<feature type="binding site" evidence="2">
    <location>
        <position position="146"/>
    </location>
    <ligand>
        <name>L-asparagine</name>
        <dbReference type="ChEBI" id="CHEBI:58048"/>
    </ligand>
</feature>
<feature type="binding site" evidence="2">
    <location>
        <position position="155"/>
    </location>
    <ligand>
        <name>Fe cation</name>
        <dbReference type="ChEBI" id="CHEBI:24875"/>
    </ligand>
</feature>
<feature type="binding site" evidence="2">
    <location>
        <position position="157"/>
    </location>
    <ligand>
        <name>Fe cation</name>
        <dbReference type="ChEBI" id="CHEBI:24875"/>
    </ligand>
</feature>
<feature type="binding site" evidence="2">
    <location>
        <position position="157"/>
    </location>
    <ligand>
        <name>L-asparagine</name>
        <dbReference type="ChEBI" id="CHEBI:58048"/>
    </ligand>
</feature>
<feature type="binding site" evidence="2">
    <location>
        <position position="158"/>
    </location>
    <ligand>
        <name>L-asparagine</name>
        <dbReference type="ChEBI" id="CHEBI:58048"/>
    </ligand>
</feature>
<feature type="binding site" evidence="2">
    <location>
        <position position="287"/>
    </location>
    <ligand>
        <name>Fe cation</name>
        <dbReference type="ChEBI" id="CHEBI:24875"/>
    </ligand>
</feature>
<feature type="binding site" evidence="2">
    <location>
        <position position="301"/>
    </location>
    <ligand>
        <name>2-oxoglutarate</name>
        <dbReference type="ChEBI" id="CHEBI:16810"/>
    </ligand>
</feature>
<feature type="binding site" evidence="2">
    <location>
        <position position="305"/>
    </location>
    <ligand>
        <name>L-asparagine</name>
        <dbReference type="ChEBI" id="CHEBI:58048"/>
    </ligand>
</feature>
<feature type="strand" evidence="4">
    <location>
        <begin position="13"/>
        <end position="15"/>
    </location>
</feature>
<feature type="helix" evidence="4">
    <location>
        <begin position="18"/>
        <end position="34"/>
    </location>
</feature>
<feature type="strand" evidence="4">
    <location>
        <begin position="35"/>
        <end position="37"/>
    </location>
</feature>
<feature type="helix" evidence="4">
    <location>
        <begin position="42"/>
        <end position="52"/>
    </location>
</feature>
<feature type="helix" evidence="4">
    <location>
        <begin position="57"/>
        <end position="68"/>
    </location>
</feature>
<feature type="turn" evidence="4">
    <location>
        <begin position="71"/>
        <end position="74"/>
    </location>
</feature>
<feature type="strand" evidence="4">
    <location>
        <begin position="75"/>
        <end position="79"/>
    </location>
</feature>
<feature type="turn" evidence="4">
    <location>
        <begin position="85"/>
        <end position="87"/>
    </location>
</feature>
<feature type="helix" evidence="4">
    <location>
        <begin position="104"/>
        <end position="116"/>
    </location>
</feature>
<feature type="strand" evidence="4">
    <location>
        <begin position="117"/>
        <end position="122"/>
    </location>
</feature>
<feature type="helix" evidence="4">
    <location>
        <begin position="126"/>
        <end position="128"/>
    </location>
</feature>
<feature type="strand" evidence="4">
    <location>
        <begin position="130"/>
        <end position="134"/>
    </location>
</feature>
<feature type="strand" evidence="4">
    <location>
        <begin position="152"/>
        <end position="155"/>
    </location>
</feature>
<feature type="turn" evidence="4">
    <location>
        <begin position="157"/>
        <end position="160"/>
    </location>
</feature>
<feature type="strand" evidence="4">
    <location>
        <begin position="166"/>
        <end position="174"/>
    </location>
</feature>
<feature type="strand" evidence="4">
    <location>
        <begin position="183"/>
        <end position="187"/>
    </location>
</feature>
<feature type="helix" evidence="4">
    <location>
        <begin position="188"/>
        <end position="191"/>
    </location>
</feature>
<feature type="helix" evidence="4">
    <location>
        <begin position="192"/>
        <end position="194"/>
    </location>
</feature>
<feature type="helix" evidence="4">
    <location>
        <begin position="197"/>
        <end position="203"/>
    </location>
</feature>
<feature type="strand" evidence="5">
    <location>
        <begin position="208"/>
        <end position="210"/>
    </location>
</feature>
<feature type="helix" evidence="4">
    <location>
        <begin position="214"/>
        <end position="216"/>
    </location>
</feature>
<feature type="strand" evidence="4">
    <location>
        <begin position="228"/>
        <end position="231"/>
    </location>
</feature>
<feature type="strand" evidence="4">
    <location>
        <begin position="233"/>
        <end position="238"/>
    </location>
</feature>
<feature type="turn" evidence="4">
    <location>
        <begin position="242"/>
        <end position="244"/>
    </location>
</feature>
<feature type="strand" evidence="4">
    <location>
        <begin position="246"/>
        <end position="249"/>
    </location>
</feature>
<feature type="helix" evidence="4">
    <location>
        <begin position="250"/>
        <end position="266"/>
    </location>
</feature>
<feature type="strand" evidence="4">
    <location>
        <begin position="268"/>
        <end position="270"/>
    </location>
</feature>
<feature type="strand" evidence="4">
    <location>
        <begin position="277"/>
        <end position="281"/>
    </location>
</feature>
<feature type="turn" evidence="4">
    <location>
        <begin position="282"/>
        <end position="284"/>
    </location>
</feature>
<feature type="strand" evidence="4">
    <location>
        <begin position="285"/>
        <end position="289"/>
    </location>
</feature>
<feature type="strand" evidence="4">
    <location>
        <begin position="302"/>
        <end position="310"/>
    </location>
</feature>
<feature type="helix" evidence="4">
    <location>
        <begin position="312"/>
        <end position="318"/>
    </location>
</feature>
<feature type="helix" evidence="4">
    <location>
        <begin position="320"/>
        <end position="322"/>
    </location>
</feature>
<feature type="strand" evidence="4">
    <location>
        <begin position="324"/>
        <end position="326"/>
    </location>
</feature>